<feature type="chain" id="PRO_1000067953" description="Small ribosomal subunit protein uS14B">
    <location>
        <begin position="1"/>
        <end position="61"/>
    </location>
</feature>
<feature type="binding site" evidence="1">
    <location>
        <position position="24"/>
    </location>
    <ligand>
        <name>Zn(2+)</name>
        <dbReference type="ChEBI" id="CHEBI:29105"/>
    </ligand>
</feature>
<feature type="binding site" evidence="1">
    <location>
        <position position="27"/>
    </location>
    <ligand>
        <name>Zn(2+)</name>
        <dbReference type="ChEBI" id="CHEBI:29105"/>
    </ligand>
</feature>
<feature type="binding site" evidence="1">
    <location>
        <position position="40"/>
    </location>
    <ligand>
        <name>Zn(2+)</name>
        <dbReference type="ChEBI" id="CHEBI:29105"/>
    </ligand>
</feature>
<feature type="binding site" evidence="1">
    <location>
        <position position="43"/>
    </location>
    <ligand>
        <name>Zn(2+)</name>
        <dbReference type="ChEBI" id="CHEBI:29105"/>
    </ligand>
</feature>
<feature type="helix" evidence="4">
    <location>
        <begin position="5"/>
        <end position="11"/>
    </location>
</feature>
<feature type="helix" evidence="3">
    <location>
        <begin position="17"/>
        <end position="19"/>
    </location>
</feature>
<feature type="turn" evidence="4">
    <location>
        <begin position="25"/>
        <end position="27"/>
    </location>
</feature>
<feature type="strand" evidence="3">
    <location>
        <begin position="31"/>
        <end position="33"/>
    </location>
</feature>
<feature type="turn" evidence="4">
    <location>
        <begin position="35"/>
        <end position="38"/>
    </location>
</feature>
<feature type="helix" evidence="4">
    <location>
        <begin position="41"/>
        <end position="49"/>
    </location>
</feature>
<feature type="strand" evidence="3">
    <location>
        <begin position="56"/>
        <end position="58"/>
    </location>
</feature>
<organism>
    <name type="scientific">Mycolicibacterium smegmatis (strain ATCC 700084 / mc(2)155)</name>
    <name type="common">Mycobacterium smegmatis</name>
    <dbReference type="NCBI Taxonomy" id="246196"/>
    <lineage>
        <taxon>Bacteria</taxon>
        <taxon>Bacillati</taxon>
        <taxon>Actinomycetota</taxon>
        <taxon>Actinomycetes</taxon>
        <taxon>Mycobacteriales</taxon>
        <taxon>Mycobacteriaceae</taxon>
        <taxon>Mycolicibacterium</taxon>
    </lineage>
</organism>
<name>RS14Z_MYCS2</name>
<protein>
    <recommendedName>
        <fullName evidence="1">Small ribosomal subunit protein uS14B</fullName>
    </recommendedName>
    <alternativeName>
        <fullName evidence="2">30S ribosomal protein S14 type Z</fullName>
    </alternativeName>
</protein>
<dbReference type="EMBL" id="CP000480">
    <property type="protein sequence ID" value="ABK70541.1"/>
    <property type="molecule type" value="Genomic_DNA"/>
</dbReference>
<dbReference type="EMBL" id="CP001663">
    <property type="protein sequence ID" value="AFP37905.1"/>
    <property type="molecule type" value="Genomic_DNA"/>
</dbReference>
<dbReference type="RefSeq" id="WP_003892855.1">
    <property type="nucleotide sequence ID" value="NZ_SIJM01000016.1"/>
</dbReference>
<dbReference type="RefSeq" id="YP_885850.1">
    <property type="nucleotide sequence ID" value="NC_008596.1"/>
</dbReference>
<dbReference type="PDB" id="5O5J">
    <property type="method" value="EM"/>
    <property type="resolution" value="3.45 A"/>
    <property type="chains" value="N=1-61"/>
</dbReference>
<dbReference type="PDB" id="5O61">
    <property type="method" value="EM"/>
    <property type="resolution" value="3.31 A"/>
    <property type="chains" value="BN=1-61"/>
</dbReference>
<dbReference type="PDB" id="5XYU">
    <property type="method" value="EM"/>
    <property type="resolution" value="3.45 A"/>
    <property type="chains" value="N=1-61"/>
</dbReference>
<dbReference type="PDB" id="5ZEB">
    <property type="method" value="EM"/>
    <property type="resolution" value="3.40 A"/>
    <property type="chains" value="n=1-61"/>
</dbReference>
<dbReference type="PDB" id="5ZEP">
    <property type="method" value="EM"/>
    <property type="resolution" value="3.40 A"/>
    <property type="chains" value="n=1-61"/>
</dbReference>
<dbReference type="PDB" id="5ZEU">
    <property type="method" value="EM"/>
    <property type="resolution" value="3.70 A"/>
    <property type="chains" value="n=1-61"/>
</dbReference>
<dbReference type="PDB" id="8V9J">
    <property type="method" value="EM"/>
    <property type="resolution" value="3.10 A"/>
    <property type="chains" value="n=1-61"/>
</dbReference>
<dbReference type="PDB" id="8V9K">
    <property type="method" value="EM"/>
    <property type="resolution" value="3.10 A"/>
    <property type="chains" value="n=1-61"/>
</dbReference>
<dbReference type="PDB" id="8V9L">
    <property type="method" value="EM"/>
    <property type="resolution" value="3.00 A"/>
    <property type="chains" value="n=1-61"/>
</dbReference>
<dbReference type="PDB" id="8VIO">
    <property type="method" value="EM"/>
    <property type="resolution" value="3.26 A"/>
    <property type="chains" value="u=1-61"/>
</dbReference>
<dbReference type="PDB" id="8WI9">
    <property type="method" value="EM"/>
    <property type="resolution" value="3.50 A"/>
    <property type="chains" value="o=1-61"/>
</dbReference>
<dbReference type="PDBsum" id="5O5J"/>
<dbReference type="PDBsum" id="5O61"/>
<dbReference type="PDBsum" id="5XYU"/>
<dbReference type="PDBsum" id="5ZEB"/>
<dbReference type="PDBsum" id="5ZEP"/>
<dbReference type="PDBsum" id="5ZEU"/>
<dbReference type="PDBsum" id="8V9J"/>
<dbReference type="PDBsum" id="8V9K"/>
<dbReference type="PDBsum" id="8V9L"/>
<dbReference type="PDBsum" id="8VIO"/>
<dbReference type="PDBsum" id="8WI9"/>
<dbReference type="EMDB" id="EMD-3748"/>
<dbReference type="EMDB" id="EMD-3751"/>
<dbReference type="EMDB" id="EMD-37561"/>
<dbReference type="EMDB" id="EMD-43074"/>
<dbReference type="EMDB" id="EMD-43075"/>
<dbReference type="EMDB" id="EMD-43076"/>
<dbReference type="EMDB" id="EMD-43267"/>
<dbReference type="EMDB" id="EMD-6790"/>
<dbReference type="EMDB" id="EMD-6920"/>
<dbReference type="EMDB" id="EMD-6921"/>
<dbReference type="EMDB" id="EMD-6923"/>
<dbReference type="SMR" id="A0QSG2"/>
<dbReference type="IntAct" id="A0QSG2">
    <property type="interactions" value="1"/>
</dbReference>
<dbReference type="STRING" id="246196.MSMEG_1468"/>
<dbReference type="PaxDb" id="246196-MSMEI_1432"/>
<dbReference type="KEGG" id="msb:LJ00_07335"/>
<dbReference type="KEGG" id="msg:MSMEI_1432"/>
<dbReference type="KEGG" id="msm:MSMEG_1468"/>
<dbReference type="PATRIC" id="fig|246196.19.peg.1453"/>
<dbReference type="eggNOG" id="COG0199">
    <property type="taxonomic scope" value="Bacteria"/>
</dbReference>
<dbReference type="OrthoDB" id="9810484at2"/>
<dbReference type="Proteomes" id="UP000000757">
    <property type="component" value="Chromosome"/>
</dbReference>
<dbReference type="Proteomes" id="UP000006158">
    <property type="component" value="Chromosome"/>
</dbReference>
<dbReference type="GO" id="GO:0005737">
    <property type="term" value="C:cytoplasm"/>
    <property type="evidence" value="ECO:0007669"/>
    <property type="project" value="UniProtKB-ARBA"/>
</dbReference>
<dbReference type="GO" id="GO:0015935">
    <property type="term" value="C:small ribosomal subunit"/>
    <property type="evidence" value="ECO:0007669"/>
    <property type="project" value="TreeGrafter"/>
</dbReference>
<dbReference type="GO" id="GO:0019843">
    <property type="term" value="F:rRNA binding"/>
    <property type="evidence" value="ECO:0007669"/>
    <property type="project" value="UniProtKB-UniRule"/>
</dbReference>
<dbReference type="GO" id="GO:0003735">
    <property type="term" value="F:structural constituent of ribosome"/>
    <property type="evidence" value="ECO:0007669"/>
    <property type="project" value="InterPro"/>
</dbReference>
<dbReference type="GO" id="GO:0008270">
    <property type="term" value="F:zinc ion binding"/>
    <property type="evidence" value="ECO:0007669"/>
    <property type="project" value="UniProtKB-UniRule"/>
</dbReference>
<dbReference type="GO" id="GO:0006412">
    <property type="term" value="P:translation"/>
    <property type="evidence" value="ECO:0007669"/>
    <property type="project" value="UniProtKB-UniRule"/>
</dbReference>
<dbReference type="FunFam" id="4.10.830.10:FF:000001">
    <property type="entry name" value="30S ribosomal protein S14 type Z"/>
    <property type="match status" value="1"/>
</dbReference>
<dbReference type="Gene3D" id="4.10.830.10">
    <property type="entry name" value="30s Ribosomal Protein S14, Chain N"/>
    <property type="match status" value="1"/>
</dbReference>
<dbReference type="HAMAP" id="MF_01364_B">
    <property type="entry name" value="Ribosomal_uS14_2_B"/>
    <property type="match status" value="1"/>
</dbReference>
<dbReference type="InterPro" id="IPR001209">
    <property type="entry name" value="Ribosomal_uS14"/>
</dbReference>
<dbReference type="InterPro" id="IPR023053">
    <property type="entry name" value="Ribosomal_uS14_bact"/>
</dbReference>
<dbReference type="InterPro" id="IPR018271">
    <property type="entry name" value="Ribosomal_uS14_CS"/>
</dbReference>
<dbReference type="InterPro" id="IPR043140">
    <property type="entry name" value="Ribosomal_uS14_sf"/>
</dbReference>
<dbReference type="NCBIfam" id="NF005974">
    <property type="entry name" value="PRK08061.1"/>
    <property type="match status" value="1"/>
</dbReference>
<dbReference type="PANTHER" id="PTHR19836">
    <property type="entry name" value="30S RIBOSOMAL PROTEIN S14"/>
    <property type="match status" value="1"/>
</dbReference>
<dbReference type="PANTHER" id="PTHR19836:SF19">
    <property type="entry name" value="SMALL RIBOSOMAL SUBUNIT PROTEIN US14M"/>
    <property type="match status" value="1"/>
</dbReference>
<dbReference type="Pfam" id="PF00253">
    <property type="entry name" value="Ribosomal_S14"/>
    <property type="match status" value="1"/>
</dbReference>
<dbReference type="SUPFAM" id="SSF57716">
    <property type="entry name" value="Glucocorticoid receptor-like (DNA-binding domain)"/>
    <property type="match status" value="1"/>
</dbReference>
<dbReference type="PROSITE" id="PS00527">
    <property type="entry name" value="RIBOSOMAL_S14"/>
    <property type="match status" value="1"/>
</dbReference>
<accession>A0QSG2</accession>
<accession>I7F8L7</accession>
<keyword id="KW-0002">3D-structure</keyword>
<keyword id="KW-0479">Metal-binding</keyword>
<keyword id="KW-1185">Reference proteome</keyword>
<keyword id="KW-0687">Ribonucleoprotein</keyword>
<keyword id="KW-0689">Ribosomal protein</keyword>
<keyword id="KW-0694">RNA-binding</keyword>
<keyword id="KW-0699">rRNA-binding</keyword>
<keyword id="KW-0862">Zinc</keyword>
<comment type="function">
    <text evidence="1">Binds 16S rRNA, required for the assembly of 30S particles and may also be responsible for determining the conformation of the 16S rRNA at the A site.</text>
</comment>
<comment type="cofactor">
    <cofactor evidence="1">
        <name>Zn(2+)</name>
        <dbReference type="ChEBI" id="CHEBI:29105"/>
    </cofactor>
    <text evidence="1">Binds 1 zinc ion per subunit.</text>
</comment>
<comment type="subunit">
    <text evidence="1">Part of the 30S ribosomal subunit. Contacts proteins S3 and S10.</text>
</comment>
<comment type="similarity">
    <text evidence="1">Belongs to the universal ribosomal protein uS14 family. Zinc-binding uS14 subfamily.</text>
</comment>
<proteinExistence type="evidence at protein level"/>
<sequence>MAKKALVHKANKKPKFAVRAYTRCNKCGRPHSVYRKFGLCRICLREMAHAGELPGVQKSSW</sequence>
<evidence type="ECO:0000255" key="1">
    <source>
        <dbReference type="HAMAP-Rule" id="MF_01364"/>
    </source>
</evidence>
<evidence type="ECO:0000305" key="2"/>
<evidence type="ECO:0007829" key="3">
    <source>
        <dbReference type="PDB" id="5O5J"/>
    </source>
</evidence>
<evidence type="ECO:0007829" key="4">
    <source>
        <dbReference type="PDB" id="5XYU"/>
    </source>
</evidence>
<gene>
    <name evidence="1" type="primary">rpsZ</name>
    <name evidence="1" type="synonym">rpsN</name>
    <name type="ordered locus">MSMEG_1468</name>
    <name type="ordered locus">MSMEI_1432</name>
</gene>
<reference key="1">
    <citation type="submission" date="2006-10" db="EMBL/GenBank/DDBJ databases">
        <authorList>
            <person name="Fleischmann R.D."/>
            <person name="Dodson R.J."/>
            <person name="Haft D.H."/>
            <person name="Merkel J.S."/>
            <person name="Nelson W.C."/>
            <person name="Fraser C.M."/>
        </authorList>
    </citation>
    <scope>NUCLEOTIDE SEQUENCE [LARGE SCALE GENOMIC DNA]</scope>
    <source>
        <strain>ATCC 700084 / mc(2)155</strain>
    </source>
</reference>
<reference key="2">
    <citation type="journal article" date="2007" name="Genome Biol.">
        <title>Interrupted coding sequences in Mycobacterium smegmatis: authentic mutations or sequencing errors?</title>
        <authorList>
            <person name="Deshayes C."/>
            <person name="Perrodou E."/>
            <person name="Gallien S."/>
            <person name="Euphrasie D."/>
            <person name="Schaeffer C."/>
            <person name="Van-Dorsselaer A."/>
            <person name="Poch O."/>
            <person name="Lecompte O."/>
            <person name="Reyrat J.-M."/>
        </authorList>
    </citation>
    <scope>NUCLEOTIDE SEQUENCE [LARGE SCALE GENOMIC DNA]</scope>
    <source>
        <strain>ATCC 700084 / mc(2)155</strain>
    </source>
</reference>
<reference key="3">
    <citation type="journal article" date="2009" name="Genome Res.">
        <title>Ortho-proteogenomics: multiple proteomes investigation through orthology and a new MS-based protocol.</title>
        <authorList>
            <person name="Gallien S."/>
            <person name="Perrodou E."/>
            <person name="Carapito C."/>
            <person name="Deshayes C."/>
            <person name="Reyrat J.-M."/>
            <person name="Van Dorsselaer A."/>
            <person name="Poch O."/>
            <person name="Schaeffer C."/>
            <person name="Lecompte O."/>
        </authorList>
    </citation>
    <scope>NUCLEOTIDE SEQUENCE [LARGE SCALE GENOMIC DNA]</scope>
    <source>
        <strain>ATCC 700084 / mc(2)155</strain>
    </source>
</reference>